<name>ISPE_YERPG</name>
<organism>
    <name type="scientific">Yersinia pestis bv. Antiqua (strain Angola)</name>
    <dbReference type="NCBI Taxonomy" id="349746"/>
    <lineage>
        <taxon>Bacteria</taxon>
        <taxon>Pseudomonadati</taxon>
        <taxon>Pseudomonadota</taxon>
        <taxon>Gammaproteobacteria</taxon>
        <taxon>Enterobacterales</taxon>
        <taxon>Yersiniaceae</taxon>
        <taxon>Yersinia</taxon>
    </lineage>
</organism>
<protein>
    <recommendedName>
        <fullName evidence="1">4-diphosphocytidyl-2-C-methyl-D-erythritol kinase</fullName>
        <shortName evidence="1">CMK</shortName>
        <ecNumber evidence="1">2.7.1.148</ecNumber>
    </recommendedName>
    <alternativeName>
        <fullName evidence="1">4-(cytidine-5'-diphospho)-2-C-methyl-D-erythritol kinase</fullName>
    </alternativeName>
</protein>
<accession>A9QZ11</accession>
<sequence>MTTANQPICPSPAKWPSPAKLNLFLYITGQRADGYHQLQTLFQFLDYGDQLTIEPRDDNQIRLLTPIAGVENEQNLIVRAAKMLQKHPGNTPVPRGADISIDKCLPMGGGLGGGSSNAATVLVALNLLWQCGLTDEQLADLGLTLGADVPVFVRGHAAFAEGIGEKLQPAEPVEKWYLVIHPGVNIPTPIIFSDPELKRNTPIRPLAALLSTPYANDCEPIARKRFREVEQALSWLLEYAPSRLTGTGACVFAEFDTESSARQVLSIAPEWLHGFVARGVNVSPLHRVRSGKIESSERR</sequence>
<proteinExistence type="inferred from homology"/>
<comment type="function">
    <text evidence="1">Catalyzes the phosphorylation of the position 2 hydroxy group of 4-diphosphocytidyl-2C-methyl-D-erythritol.</text>
</comment>
<comment type="catalytic activity">
    <reaction evidence="1">
        <text>4-CDP-2-C-methyl-D-erythritol + ATP = 4-CDP-2-C-methyl-D-erythritol 2-phosphate + ADP + H(+)</text>
        <dbReference type="Rhea" id="RHEA:18437"/>
        <dbReference type="ChEBI" id="CHEBI:15378"/>
        <dbReference type="ChEBI" id="CHEBI:30616"/>
        <dbReference type="ChEBI" id="CHEBI:57823"/>
        <dbReference type="ChEBI" id="CHEBI:57919"/>
        <dbReference type="ChEBI" id="CHEBI:456216"/>
        <dbReference type="EC" id="2.7.1.148"/>
    </reaction>
</comment>
<comment type="pathway">
    <text evidence="1">Isoprenoid biosynthesis; isopentenyl diphosphate biosynthesis via DXP pathway; isopentenyl diphosphate from 1-deoxy-D-xylulose 5-phosphate: step 3/6.</text>
</comment>
<comment type="subunit">
    <text evidence="1">Homodimer.</text>
</comment>
<comment type="similarity">
    <text evidence="1">Belongs to the GHMP kinase family. IspE subfamily.</text>
</comment>
<feature type="chain" id="PRO_1000092128" description="4-diphosphocytidyl-2-C-methyl-D-erythritol kinase">
    <location>
        <begin position="1"/>
        <end position="299"/>
    </location>
</feature>
<feature type="active site" evidence="1">
    <location>
        <position position="20"/>
    </location>
</feature>
<feature type="active site" evidence="1">
    <location>
        <position position="148"/>
    </location>
</feature>
<feature type="binding site" evidence="1">
    <location>
        <begin position="106"/>
        <end position="116"/>
    </location>
    <ligand>
        <name>ATP</name>
        <dbReference type="ChEBI" id="CHEBI:30616"/>
    </ligand>
</feature>
<keyword id="KW-0067">ATP-binding</keyword>
<keyword id="KW-0414">Isoprene biosynthesis</keyword>
<keyword id="KW-0418">Kinase</keyword>
<keyword id="KW-0547">Nucleotide-binding</keyword>
<keyword id="KW-0808">Transferase</keyword>
<dbReference type="EC" id="2.7.1.148" evidence="1"/>
<dbReference type="EMBL" id="CP000901">
    <property type="protein sequence ID" value="ABX88567.1"/>
    <property type="molecule type" value="Genomic_DNA"/>
</dbReference>
<dbReference type="RefSeq" id="WP_002211239.1">
    <property type="nucleotide sequence ID" value="NZ_CP009935.1"/>
</dbReference>
<dbReference type="SMR" id="A9QZ11"/>
<dbReference type="GeneID" id="57976647"/>
<dbReference type="KEGG" id="ypg:YpAngola_A2463"/>
<dbReference type="UniPathway" id="UPA00056">
    <property type="reaction ID" value="UER00094"/>
</dbReference>
<dbReference type="GO" id="GO:0050515">
    <property type="term" value="F:4-(cytidine 5'-diphospho)-2-C-methyl-D-erythritol kinase activity"/>
    <property type="evidence" value="ECO:0007669"/>
    <property type="project" value="UniProtKB-UniRule"/>
</dbReference>
<dbReference type="GO" id="GO:0005524">
    <property type="term" value="F:ATP binding"/>
    <property type="evidence" value="ECO:0007669"/>
    <property type="project" value="UniProtKB-UniRule"/>
</dbReference>
<dbReference type="GO" id="GO:0019288">
    <property type="term" value="P:isopentenyl diphosphate biosynthetic process, methylerythritol 4-phosphate pathway"/>
    <property type="evidence" value="ECO:0007669"/>
    <property type="project" value="UniProtKB-UniRule"/>
</dbReference>
<dbReference type="GO" id="GO:0016114">
    <property type="term" value="P:terpenoid biosynthetic process"/>
    <property type="evidence" value="ECO:0007669"/>
    <property type="project" value="InterPro"/>
</dbReference>
<dbReference type="FunFam" id="3.30.230.10:FF:000022">
    <property type="entry name" value="4-diphosphocytidyl-2-C-methyl-D-erythritol kinase"/>
    <property type="match status" value="1"/>
</dbReference>
<dbReference type="FunFam" id="3.30.70.890:FF:000004">
    <property type="entry name" value="4-diphosphocytidyl-2-C-methyl-D-erythritol kinase"/>
    <property type="match status" value="1"/>
</dbReference>
<dbReference type="Gene3D" id="3.30.230.10">
    <property type="match status" value="1"/>
</dbReference>
<dbReference type="Gene3D" id="3.30.70.890">
    <property type="entry name" value="GHMP kinase, C-terminal domain"/>
    <property type="match status" value="1"/>
</dbReference>
<dbReference type="HAMAP" id="MF_00061">
    <property type="entry name" value="IspE"/>
    <property type="match status" value="1"/>
</dbReference>
<dbReference type="InterPro" id="IPR013750">
    <property type="entry name" value="GHMP_kinase_C_dom"/>
</dbReference>
<dbReference type="InterPro" id="IPR036554">
    <property type="entry name" value="GHMP_kinase_C_sf"/>
</dbReference>
<dbReference type="InterPro" id="IPR006204">
    <property type="entry name" value="GHMP_kinase_N_dom"/>
</dbReference>
<dbReference type="InterPro" id="IPR004424">
    <property type="entry name" value="IspE"/>
</dbReference>
<dbReference type="InterPro" id="IPR020568">
    <property type="entry name" value="Ribosomal_Su5_D2-typ_SF"/>
</dbReference>
<dbReference type="InterPro" id="IPR014721">
    <property type="entry name" value="Ribsml_uS5_D2-typ_fold_subgr"/>
</dbReference>
<dbReference type="NCBIfam" id="TIGR00154">
    <property type="entry name" value="ispE"/>
    <property type="match status" value="1"/>
</dbReference>
<dbReference type="PANTHER" id="PTHR43527">
    <property type="entry name" value="4-DIPHOSPHOCYTIDYL-2-C-METHYL-D-ERYTHRITOL KINASE, CHLOROPLASTIC"/>
    <property type="match status" value="1"/>
</dbReference>
<dbReference type="PANTHER" id="PTHR43527:SF2">
    <property type="entry name" value="4-DIPHOSPHOCYTIDYL-2-C-METHYL-D-ERYTHRITOL KINASE, CHLOROPLASTIC"/>
    <property type="match status" value="1"/>
</dbReference>
<dbReference type="Pfam" id="PF08544">
    <property type="entry name" value="GHMP_kinases_C"/>
    <property type="match status" value="1"/>
</dbReference>
<dbReference type="Pfam" id="PF00288">
    <property type="entry name" value="GHMP_kinases_N"/>
    <property type="match status" value="1"/>
</dbReference>
<dbReference type="PIRSF" id="PIRSF010376">
    <property type="entry name" value="IspE"/>
    <property type="match status" value="1"/>
</dbReference>
<dbReference type="SUPFAM" id="SSF55060">
    <property type="entry name" value="GHMP Kinase, C-terminal domain"/>
    <property type="match status" value="1"/>
</dbReference>
<dbReference type="SUPFAM" id="SSF54211">
    <property type="entry name" value="Ribosomal protein S5 domain 2-like"/>
    <property type="match status" value="1"/>
</dbReference>
<evidence type="ECO:0000255" key="1">
    <source>
        <dbReference type="HAMAP-Rule" id="MF_00061"/>
    </source>
</evidence>
<reference key="1">
    <citation type="journal article" date="2010" name="J. Bacteriol.">
        <title>Genome sequence of the deep-rooted Yersinia pestis strain Angola reveals new insights into the evolution and pangenome of the plague bacterium.</title>
        <authorList>
            <person name="Eppinger M."/>
            <person name="Worsham P.L."/>
            <person name="Nikolich M.P."/>
            <person name="Riley D.R."/>
            <person name="Sebastian Y."/>
            <person name="Mou S."/>
            <person name="Achtman M."/>
            <person name="Lindler L.E."/>
            <person name="Ravel J."/>
        </authorList>
    </citation>
    <scope>NUCLEOTIDE SEQUENCE [LARGE SCALE GENOMIC DNA]</scope>
    <source>
        <strain>Angola</strain>
    </source>
</reference>
<gene>
    <name evidence="1" type="primary">ispE</name>
    <name type="ordered locus">YpAngola_A2463</name>
</gene>